<accession>G7LAA8</accession>
<accession>A0A0C3Y356</accession>
<accession>A0A396GQY3</accession>
<accession>A0A396GT18</accession>
<comment type="function">
    <text evidence="1 4">Involved in ammonium transport (By similarity). Required for arbuscular mycorrhizal (AM) symbiosis with AM fungi (e.g. Glomus versiforme and G.intraradices) in low nitrogen conditions (PubMed:25841038).</text>
</comment>
<comment type="subcellular location">
    <subcellularLocation>
        <location evidence="4">Cell membrane</location>
        <topology evidence="2">Multi-pass membrane protein</topology>
    </subcellularLocation>
    <text evidence="4">Present on the periarbuscular membrane in cells containing arbuscules during arbuscular mycorrhizal (AM) symbiosis with AM fungi (e.g. Glomus versiforme).</text>
</comment>
<comment type="tissue specificity">
    <text evidence="4">Mostly expressed in mycorrhizal roots (PubMed:25841038). Also observed in the cortex and endodermis of non-mycorrhizal roots (PubMed:25841038).</text>
</comment>
<comment type="developmental stage">
    <text evidence="4">Expressed in cortical cells containing arbuscules of mycorrhizal roots upon arbuscular mycorrhizal (AM) symbiosis with AM fungi (e.g. Glomus intraradices).</text>
</comment>
<comment type="induction">
    <text evidence="4">Accumulates in roots during colonization by arbuscular mycorrhizal (AM) fungi (e.g. Glomus versiforme).</text>
</comment>
<comment type="disruption phenotype">
    <text evidence="4">Normal arbuscular mycorrhizal (AM) symbiosis with AM fungi (PubMed:25841038). Plants missing both PT4 and AMT2-3 fail to establish AM symbiosis with AM fungi in high nitrogen conditions, leading to premature arbuscule degeneration (PAD); these phenotypes are not suppressed in nitrogen-deprived conditions (PubMed:25841038).</text>
</comment>
<comment type="similarity">
    <text evidence="6">Belongs to the ammonia transporter channel (TC 1.A.11.2) family.</text>
</comment>
<comment type="sequence caution" evidence="6">
    <conflict type="erroneous gene model prediction">
        <sequence resource="EMBL-CDS" id="RHN41914"/>
    </conflict>
</comment>
<comment type="sequence caution" evidence="6">
    <conflict type="erroneous gene model prediction">
        <sequence resource="EMBL-CDS" id="RHN41915"/>
    </conflict>
</comment>
<gene>
    <name evidence="5" type="primary">AMT2-3</name>
    <name evidence="7" type="ordered locus">MTR_8g074750</name>
    <name evidence="8" type="ORF">MtrunA17_Chr8g0371161</name>
    <name evidence="9" type="ORF">MtrunA17_Chr8g0371171</name>
</gene>
<dbReference type="EMBL" id="CM001224">
    <property type="protein sequence ID" value="AET03699.2"/>
    <property type="molecule type" value="Genomic_DNA"/>
</dbReference>
<dbReference type="EMBL" id="PSQE01000008">
    <property type="protein sequence ID" value="RHN41914.1"/>
    <property type="status" value="ALT_SEQ"/>
    <property type="molecule type" value="Genomic_DNA"/>
</dbReference>
<dbReference type="EMBL" id="PSQE01000008">
    <property type="protein sequence ID" value="RHN41915.1"/>
    <property type="status" value="ALT_SEQ"/>
    <property type="molecule type" value="Genomic_DNA"/>
</dbReference>
<dbReference type="SMR" id="G7LAA8"/>
<dbReference type="STRING" id="3880.G7LAA8"/>
<dbReference type="GlyCosmos" id="G7LAA8">
    <property type="glycosylation" value="1 site, No reported glycans"/>
</dbReference>
<dbReference type="PaxDb" id="3880-AET03699"/>
<dbReference type="GeneID" id="11444316"/>
<dbReference type="KEGG" id="mtr:11444316"/>
<dbReference type="eggNOG" id="KOG0682">
    <property type="taxonomic scope" value="Eukaryota"/>
</dbReference>
<dbReference type="HOGENOM" id="CLU_000445_33_4_1"/>
<dbReference type="OrthoDB" id="534912at2759"/>
<dbReference type="Proteomes" id="UP000002051">
    <property type="component" value="Chromosome 8"/>
</dbReference>
<dbReference type="Proteomes" id="UP000265566">
    <property type="component" value="Chromosome 8"/>
</dbReference>
<dbReference type="GO" id="GO:0085042">
    <property type="term" value="C:periarbuscular membrane"/>
    <property type="evidence" value="ECO:0000314"/>
    <property type="project" value="UniProtKB"/>
</dbReference>
<dbReference type="GO" id="GO:0005886">
    <property type="term" value="C:plasma membrane"/>
    <property type="evidence" value="ECO:0000318"/>
    <property type="project" value="GO_Central"/>
</dbReference>
<dbReference type="GO" id="GO:0008519">
    <property type="term" value="F:ammonium channel activity"/>
    <property type="evidence" value="ECO:0000318"/>
    <property type="project" value="GO_Central"/>
</dbReference>
<dbReference type="GO" id="GO:0072488">
    <property type="term" value="P:ammonium transmembrane transport"/>
    <property type="evidence" value="ECO:0000318"/>
    <property type="project" value="GO_Central"/>
</dbReference>
<dbReference type="GO" id="GO:0036377">
    <property type="term" value="P:arbuscular mycorrhizal association"/>
    <property type="evidence" value="ECO:0000315"/>
    <property type="project" value="UniProtKB"/>
</dbReference>
<dbReference type="GO" id="GO:0009610">
    <property type="term" value="P:response to symbiotic fungus"/>
    <property type="evidence" value="ECO:0000270"/>
    <property type="project" value="UniProtKB"/>
</dbReference>
<dbReference type="FunFam" id="1.10.3430.10:FF:000005">
    <property type="entry name" value="Ammonium transporter"/>
    <property type="match status" value="1"/>
</dbReference>
<dbReference type="Gene3D" id="1.10.3430.10">
    <property type="entry name" value="Ammonium transporter AmtB like domains"/>
    <property type="match status" value="1"/>
</dbReference>
<dbReference type="InterPro" id="IPR029020">
    <property type="entry name" value="Ammonium/urea_transptr"/>
</dbReference>
<dbReference type="InterPro" id="IPR001905">
    <property type="entry name" value="Ammonium_transpt"/>
</dbReference>
<dbReference type="InterPro" id="IPR018047">
    <property type="entry name" value="Ammonium_transpt_CS"/>
</dbReference>
<dbReference type="InterPro" id="IPR024041">
    <property type="entry name" value="NH4_transpt_AmtB-like_dom"/>
</dbReference>
<dbReference type="InterPro" id="IPR002229">
    <property type="entry name" value="RhesusRHD"/>
</dbReference>
<dbReference type="NCBIfam" id="TIGR00836">
    <property type="entry name" value="amt"/>
    <property type="match status" value="1"/>
</dbReference>
<dbReference type="PANTHER" id="PTHR43029:SF24">
    <property type="entry name" value="AMMONIUM TRANSPORTER 2 MEMBER 3"/>
    <property type="match status" value="1"/>
</dbReference>
<dbReference type="PANTHER" id="PTHR43029">
    <property type="entry name" value="AMMONIUM TRANSPORTER MEP2"/>
    <property type="match status" value="1"/>
</dbReference>
<dbReference type="Pfam" id="PF00909">
    <property type="entry name" value="Ammonium_transp"/>
    <property type="match status" value="1"/>
</dbReference>
<dbReference type="PRINTS" id="PR00342">
    <property type="entry name" value="RHESUSRHD"/>
</dbReference>
<dbReference type="SUPFAM" id="SSF111352">
    <property type="entry name" value="Ammonium transporter"/>
    <property type="match status" value="1"/>
</dbReference>
<dbReference type="PROSITE" id="PS01219">
    <property type="entry name" value="AMMONIUM_TRANSP"/>
    <property type="match status" value="1"/>
</dbReference>
<organism>
    <name type="scientific">Medicago truncatula</name>
    <name type="common">Barrel medic</name>
    <name type="synonym">Medicago tribuloides</name>
    <dbReference type="NCBI Taxonomy" id="3880"/>
    <lineage>
        <taxon>Eukaryota</taxon>
        <taxon>Viridiplantae</taxon>
        <taxon>Streptophyta</taxon>
        <taxon>Embryophyta</taxon>
        <taxon>Tracheophyta</taxon>
        <taxon>Spermatophyta</taxon>
        <taxon>Magnoliopsida</taxon>
        <taxon>eudicotyledons</taxon>
        <taxon>Gunneridae</taxon>
        <taxon>Pentapetalae</taxon>
        <taxon>rosids</taxon>
        <taxon>fabids</taxon>
        <taxon>Fabales</taxon>
        <taxon>Fabaceae</taxon>
        <taxon>Papilionoideae</taxon>
        <taxon>50 kb inversion clade</taxon>
        <taxon>NPAAA clade</taxon>
        <taxon>Hologalegina</taxon>
        <taxon>IRL clade</taxon>
        <taxon>Trifolieae</taxon>
        <taxon>Medicago</taxon>
    </lineage>
</organism>
<keyword id="KW-0924">Ammonia transport</keyword>
<keyword id="KW-1003">Cell membrane</keyword>
<keyword id="KW-0325">Glycoprotein</keyword>
<keyword id="KW-0472">Membrane</keyword>
<keyword id="KW-1185">Reference proteome</keyword>
<keyword id="KW-0812">Transmembrane</keyword>
<keyword id="KW-1133">Transmembrane helix</keyword>
<keyword id="KW-0813">Transport</keyword>
<proteinExistence type="evidence at transcript level"/>
<name>AMT23_MEDTR</name>
<protein>
    <recommendedName>
        <fullName evidence="5">Ammonium transporter 2 member 3</fullName>
        <shortName evidence="5">Ammonium transporter 2;3</shortName>
        <shortName evidence="5">MtAMT2;3</shortName>
    </recommendedName>
</protein>
<sequence length="481" mass="53080">MNFNSSKYISHLPESLLPNDASPEWNNKADNAWQLTAATLVGLQTVPGLVILYGSMVKKKWAVNSAFMALYAFAAVLVCWVLWAHHMAFGTKLLPFVGKPNFALSQKFLLSKASTNYYLPMADFVFYQFAFAAITLVLLGGSLLGRMNFYAWMLFVPLWLTLSYTVGAFTIWGNGFLEGKIIDYAGGFVIHLSSGVAGFTAAYWVGPRTSNDRQNFPPNNIIHMLGGAGFLWMGWTGFNGGAPFQVGEITSLAIFNTHLCTATSILVWISLDMAVYKKGSLIGSVQGMMTGLVCITPGAGLVDPWAAILMGALSGSIPWYTMMVLHKKSPFFQSVDDTLGVFHTHAVAGILGGILSGVFAKPKLLRILYGPYGSGLLYSYFDDNIGQGIKQMWYQLLGAVFITIWNVVITSLICILLNRFVNLRMQEEDLEVGDDAAHGEEAYVLWGDGERMRLPLRRDISPIIPYISHQRHSFPINKIDE</sequence>
<reference key="1">
    <citation type="journal article" date="2011" name="Nature">
        <title>The Medicago genome provides insight into the evolution of rhizobial symbioses.</title>
        <authorList>
            <person name="Young N.D."/>
            <person name="Debelle F."/>
            <person name="Oldroyd G.E.D."/>
            <person name="Geurts R."/>
            <person name="Cannon S.B."/>
            <person name="Udvardi M.K."/>
            <person name="Benedito V.A."/>
            <person name="Mayer K.F.X."/>
            <person name="Gouzy J."/>
            <person name="Schoof H."/>
            <person name="Van de Peer Y."/>
            <person name="Proost S."/>
            <person name="Cook D.R."/>
            <person name="Meyers B.C."/>
            <person name="Spannagl M."/>
            <person name="Cheung F."/>
            <person name="De Mita S."/>
            <person name="Krishnakumar V."/>
            <person name="Gundlach H."/>
            <person name="Zhou S."/>
            <person name="Mudge J."/>
            <person name="Bharti A.K."/>
            <person name="Murray J.D."/>
            <person name="Naoumkina M.A."/>
            <person name="Rosen B."/>
            <person name="Silverstein K.A.T."/>
            <person name="Tang H."/>
            <person name="Rombauts S."/>
            <person name="Zhao P.X."/>
            <person name="Zhou P."/>
            <person name="Barbe V."/>
            <person name="Bardou P."/>
            <person name="Bechner M."/>
            <person name="Bellec A."/>
            <person name="Berger A."/>
            <person name="Berges H."/>
            <person name="Bidwell S."/>
            <person name="Bisseling T."/>
            <person name="Choisne N."/>
            <person name="Couloux A."/>
            <person name="Denny R."/>
            <person name="Deshpande S."/>
            <person name="Dai X."/>
            <person name="Doyle J.J."/>
            <person name="Dudez A.-M."/>
            <person name="Farmer A.D."/>
            <person name="Fouteau S."/>
            <person name="Franken C."/>
            <person name="Gibelin C."/>
            <person name="Gish J."/>
            <person name="Goldstein S."/>
            <person name="Gonzalez A.J."/>
            <person name="Green P.J."/>
            <person name="Hallab A."/>
            <person name="Hartog M."/>
            <person name="Hua A."/>
            <person name="Humphray S.J."/>
            <person name="Jeong D.-H."/>
            <person name="Jing Y."/>
            <person name="Jocker A."/>
            <person name="Kenton S.M."/>
            <person name="Kim D.-J."/>
            <person name="Klee K."/>
            <person name="Lai H."/>
            <person name="Lang C."/>
            <person name="Lin S."/>
            <person name="Macmil S.L."/>
            <person name="Magdelenat G."/>
            <person name="Matthews L."/>
            <person name="McCorrison J."/>
            <person name="Monaghan E.L."/>
            <person name="Mun J.-H."/>
            <person name="Najar F.Z."/>
            <person name="Nicholson C."/>
            <person name="Noirot C."/>
            <person name="O'Bleness M."/>
            <person name="Paule C.R."/>
            <person name="Poulain J."/>
            <person name="Prion F."/>
            <person name="Qin B."/>
            <person name="Qu C."/>
            <person name="Retzel E.F."/>
            <person name="Riddle C."/>
            <person name="Sallet E."/>
            <person name="Samain S."/>
            <person name="Samson N."/>
            <person name="Sanders I."/>
            <person name="Saurat O."/>
            <person name="Scarpelli C."/>
            <person name="Schiex T."/>
            <person name="Segurens B."/>
            <person name="Severin A.J."/>
            <person name="Sherrier D.J."/>
            <person name="Shi R."/>
            <person name="Sims S."/>
            <person name="Singer S.R."/>
            <person name="Sinharoy S."/>
            <person name="Sterck L."/>
            <person name="Viollet A."/>
            <person name="Wang B.-B."/>
            <person name="Wang K."/>
            <person name="Wang M."/>
            <person name="Wang X."/>
            <person name="Warfsmann J."/>
            <person name="Weissenbach J."/>
            <person name="White D.D."/>
            <person name="White J.D."/>
            <person name="Wiley G.B."/>
            <person name="Wincker P."/>
            <person name="Xing Y."/>
            <person name="Yang L."/>
            <person name="Yao Z."/>
            <person name="Ying F."/>
            <person name="Zhai J."/>
            <person name="Zhou L."/>
            <person name="Zuber A."/>
            <person name="Denarie J."/>
            <person name="Dixon R.A."/>
            <person name="May G.D."/>
            <person name="Schwartz D.C."/>
            <person name="Rogers J."/>
            <person name="Quetier F."/>
            <person name="Town C.D."/>
            <person name="Roe B.A."/>
        </authorList>
    </citation>
    <scope>NUCLEOTIDE SEQUENCE [LARGE SCALE GENOMIC DNA]</scope>
    <source>
        <strain>cv. Jemalong A17</strain>
    </source>
</reference>
<reference key="2">
    <citation type="journal article" date="2014" name="BMC Genomics">
        <title>An improved genome release (version Mt4.0) for the model legume Medicago truncatula.</title>
        <authorList>
            <person name="Tang H."/>
            <person name="Krishnakumar V."/>
            <person name="Bidwell S."/>
            <person name="Rosen B."/>
            <person name="Chan A."/>
            <person name="Zhou S."/>
            <person name="Gentzbittel L."/>
            <person name="Childs K.L."/>
            <person name="Yandell M."/>
            <person name="Gundlach H."/>
            <person name="Mayer K.F."/>
            <person name="Schwartz D.C."/>
            <person name="Town C.D."/>
        </authorList>
    </citation>
    <scope>GENOME REANNOTATION</scope>
    <source>
        <strain>cv. Jemalong A17</strain>
    </source>
</reference>
<reference key="3">
    <citation type="journal article" date="2018" name="Nat. Plants">
        <title>Whole-genome landscape of Medicago truncatula symbiotic genes.</title>
        <authorList>
            <person name="Pecrix Y."/>
            <person name="Staton S.E."/>
            <person name="Sallet E."/>
            <person name="Lelandais-Briere C."/>
            <person name="Moreau S."/>
            <person name="Carrere S."/>
            <person name="Blein T."/>
            <person name="Jardinaud M.F."/>
            <person name="Latrasse D."/>
            <person name="Zouine M."/>
            <person name="Zahm M."/>
            <person name="Kreplak J."/>
            <person name="Mayjonade B."/>
            <person name="Satge C."/>
            <person name="Perez M."/>
            <person name="Cauet S."/>
            <person name="Marande W."/>
            <person name="Chantry-Darmon C."/>
            <person name="Lopez-Roques C."/>
            <person name="Bouchez O."/>
            <person name="Berard A."/>
            <person name="Debelle F."/>
            <person name="Munos S."/>
            <person name="Bendahmane A."/>
            <person name="Berges H."/>
            <person name="Niebel A."/>
            <person name="Buitink J."/>
            <person name="Frugier F."/>
            <person name="Benhamed M."/>
            <person name="Crespi M."/>
            <person name="Gouzy J."/>
            <person name="Gamas P."/>
        </authorList>
    </citation>
    <scope>NUCLEOTIDE SEQUENCE [LARGE SCALE GENOMIC DNA]</scope>
    <source>
        <strain>cv. Jemalong A17</strain>
    </source>
</reference>
<reference key="4">
    <citation type="journal article" date="2015" name="Plant Cell">
        <title>Suppression of arbuscule degeneration in Medicago truncatula phosphate transporter4 mutants is dependent on the ammonium transporter 2 family protein AMT2;3.</title>
        <authorList>
            <person name="Breuillin-Sessoms F."/>
            <person name="Floss D.S."/>
            <person name="Gomez S.K."/>
            <person name="Pumplin N."/>
            <person name="Ding Y."/>
            <person name="Levesque-Tremblay V."/>
            <person name="Noar R.D."/>
            <person name="Daniels D.A."/>
            <person name="Bravo A."/>
            <person name="Eaglesham J.B."/>
            <person name="Benedito V.A."/>
            <person name="Udvardi M.K."/>
            <person name="Harrison M.J."/>
        </authorList>
    </citation>
    <scope>FUNCTION</scope>
    <scope>DISRUPTION PHENOTYPE</scope>
    <scope>INDUCTION BY ARBUSCULAR MYCORRHIZAL FUNGI</scope>
    <scope>DEVELOPMENTAL STAGE</scope>
    <scope>TISSUE SPECIFICITY</scope>
    <scope>SUBCELLULAR LOCATION</scope>
    <source>
        <strain>cv. Jemalong A17</strain>
    </source>
</reference>
<evidence type="ECO:0000250" key="1">
    <source>
        <dbReference type="UniProtKB" id="Q9M6N7"/>
    </source>
</evidence>
<evidence type="ECO:0000255" key="2"/>
<evidence type="ECO:0000255" key="3">
    <source>
        <dbReference type="PROSITE-ProRule" id="PRU00498"/>
    </source>
</evidence>
<evidence type="ECO:0000269" key="4">
    <source>
    </source>
</evidence>
<evidence type="ECO:0000303" key="5">
    <source>
    </source>
</evidence>
<evidence type="ECO:0000305" key="6"/>
<evidence type="ECO:0000312" key="7">
    <source>
        <dbReference type="EMBL" id="AET03699.2"/>
    </source>
</evidence>
<evidence type="ECO:0000312" key="8">
    <source>
        <dbReference type="EMBL" id="RHN41914.1"/>
    </source>
</evidence>
<evidence type="ECO:0000312" key="9">
    <source>
        <dbReference type="EMBL" id="RHN41915.1"/>
    </source>
</evidence>
<feature type="chain" id="PRO_0000450041" description="Ammonium transporter 2 member 3">
    <location>
        <begin position="1"/>
        <end position="481"/>
    </location>
</feature>
<feature type="topological domain" description="Extracellular" evidence="6">
    <location>
        <begin position="1"/>
        <end position="36"/>
    </location>
</feature>
<feature type="transmembrane region" description="Helical; Name=1" evidence="2">
    <location>
        <begin position="37"/>
        <end position="57"/>
    </location>
</feature>
<feature type="topological domain" description="Cytoplasmic" evidence="6">
    <location>
        <begin position="58"/>
        <end position="62"/>
    </location>
</feature>
<feature type="transmembrane region" description="Helical; Name=2" evidence="2">
    <location>
        <begin position="63"/>
        <end position="83"/>
    </location>
</feature>
<feature type="topological domain" description="Extracellular" evidence="6">
    <location>
        <begin position="84"/>
        <end position="123"/>
    </location>
</feature>
<feature type="transmembrane region" description="Helical; Name=3" evidence="2">
    <location>
        <begin position="124"/>
        <end position="144"/>
    </location>
</feature>
<feature type="topological domain" description="Cytoplasmic" evidence="6">
    <location>
        <begin position="145"/>
        <end position="151"/>
    </location>
</feature>
<feature type="transmembrane region" description="Helical; Name=4" evidence="2">
    <location>
        <begin position="152"/>
        <end position="172"/>
    </location>
</feature>
<feature type="topological domain" description="Extracellular" evidence="6">
    <location>
        <begin position="173"/>
        <end position="184"/>
    </location>
</feature>
<feature type="transmembrane region" description="Helical; Name=5" evidence="2">
    <location>
        <begin position="185"/>
        <end position="205"/>
    </location>
</feature>
<feature type="topological domain" description="Cytoplasmic" evidence="6">
    <location>
        <begin position="206"/>
        <end position="220"/>
    </location>
</feature>
<feature type="transmembrane region" description="Helical; Name=6" evidence="2">
    <location>
        <begin position="221"/>
        <end position="241"/>
    </location>
</feature>
<feature type="topological domain" description="Extracellular" evidence="6">
    <location>
        <begin position="242"/>
        <end position="248"/>
    </location>
</feature>
<feature type="transmembrane region" description="Helical; Name=7" evidence="2">
    <location>
        <begin position="249"/>
        <end position="269"/>
    </location>
</feature>
<feature type="topological domain" description="Cytoplasmic" evidence="6">
    <location>
        <begin position="270"/>
        <end position="281"/>
    </location>
</feature>
<feature type="transmembrane region" description="Helical; Name=8" evidence="2">
    <location>
        <begin position="282"/>
        <end position="302"/>
    </location>
</feature>
<feature type="topological domain" description="Extracellular" evidence="6">
    <location>
        <begin position="303"/>
        <end position="304"/>
    </location>
</feature>
<feature type="transmembrane region" description="Helical; Name=9" evidence="2">
    <location>
        <begin position="305"/>
        <end position="325"/>
    </location>
</feature>
<feature type="topological domain" description="Cytoplasmic" evidence="6">
    <location>
        <begin position="326"/>
        <end position="338"/>
    </location>
</feature>
<feature type="transmembrane region" description="Helical; Name=10" evidence="2">
    <location>
        <begin position="339"/>
        <end position="359"/>
    </location>
</feature>
<feature type="topological domain" description="Extracellular" evidence="6">
    <location>
        <begin position="360"/>
        <end position="363"/>
    </location>
</feature>
<feature type="transmembrane region" description="Helical; Name=11" evidence="2">
    <location>
        <begin position="364"/>
        <end position="381"/>
    </location>
</feature>
<feature type="topological domain" description="Cytoplasmic" evidence="6">
    <location>
        <begin position="382"/>
        <end position="395"/>
    </location>
</feature>
<feature type="transmembrane region" description="Helical; Name=12" evidence="2">
    <location>
        <begin position="396"/>
        <end position="416"/>
    </location>
</feature>
<feature type="topological domain" description="Extracellular" evidence="6">
    <location>
        <begin position="417"/>
        <end position="481"/>
    </location>
</feature>
<feature type="glycosylation site" description="N-linked (GlcNAc...) asparagine" evidence="3">
    <location>
        <position position="4"/>
    </location>
</feature>